<name>PUF5_CAEEL</name>
<gene>
    <name evidence="9 10" type="primary">puf-5</name>
    <name type="ORF">F54C9.8</name>
</gene>
<proteinExistence type="evidence at transcript level"/>
<sequence length="553" mass="62575">MSDSTGRINSKASDSSSISDHQTADLSIFNGSFDGGAFSSSNIPLFNFMGTGNQRFQYSPHPFAKSSDPCRLAALTPSTPKGPLNLTPADFGLADFSVGNESFADFTANNTSFVGNVQSNVRSTRLLPAWAVDNSGNIRDDLTLQDVVSNGSLIDFAMDRTGVKFLERHFPEDHDNEMHFVLFDKLTEQGAVFTSLCRSAAGNFIIQKFVEHATLDEQERLVRKMCDNGLIEMCLDKFACRVVQMSIQKFDVSIAMKLVEKISSLDFLPLCTDQCAIHVLQKVVKLLPISAWSFFVKFLCRDDNLMTVCQDKYGCRLVQQTIDKLSDNPKLHCFNTRLQLLHGLMTSVARNCFRLSSNEFANYVVQYVIKSSGVMEMYRDTIIEKCLLRNILSMSQDKYASHVVEGAFLFAPPLLLSEMMDEIFDGYVKDQETNRDALDILLFHQYGNYVVQQMISICISALLGKEERKMVASEMRLYAKWFDRIKNRVNRHSGRLERFSSGKKIIESLQKLNVPMTMTNEPMPYWAMPTPLMDISAHFMNKLNFQKNSVFDE</sequence>
<evidence type="ECO:0000250" key="1">
    <source>
        <dbReference type="UniProtKB" id="O44169"/>
    </source>
</evidence>
<evidence type="ECO:0000255" key="2"/>
<evidence type="ECO:0000269" key="3">
    <source>
    </source>
</evidence>
<evidence type="ECO:0000269" key="4">
    <source>
    </source>
</evidence>
<evidence type="ECO:0000269" key="5">
    <source>
    </source>
</evidence>
<evidence type="ECO:0000269" key="6">
    <source>
    </source>
</evidence>
<evidence type="ECO:0000303" key="7">
    <source>
    </source>
</evidence>
<evidence type="ECO:0000305" key="8"/>
<evidence type="ECO:0000312" key="9">
    <source>
        <dbReference type="EMBL" id="CAA90254.1"/>
    </source>
</evidence>
<evidence type="ECO:0000312" key="10">
    <source>
        <dbReference type="WormBase" id="F54C9.8"/>
    </source>
</evidence>
<comment type="function">
    <text evidence="3 4 5 6">RNA-binding protein that binds to the consensus sequence 5'-CUCUGUAUCUUGU-3' in mRNA 3'-UTRs and modulates mRNA expression and stability. Functions redundantly with puf-6 and puf-7 in oocyte formation and organization, early embryonic cell divisions, and repression of expression of glp-1 and other maternal mRNAs in late oogenesis.</text>
</comment>
<comment type="subcellular location">
    <subcellularLocation>
        <location evidence="3 5">Cytoplasm</location>
    </subcellularLocation>
    <subcellularLocation>
        <location>Cytoplasm</location>
        <location>P-body</location>
    </subcellularLocation>
    <text evidence="3 5">Localizes to perinuclear and cytoplasmic P granules.</text>
</comment>
<comment type="tissue specificity">
    <text evidence="3">Detected in differentiating oocytes with highest levels observed in developing ooctyes in the distal portion of the proximal gonad.</text>
</comment>
<comment type="developmental stage">
    <text evidence="3">Expressed during a specific period of late oogenesis, from late meiotic pachytene to late diakinesis. Repressed prior to terminal oocyte differentiation.</text>
</comment>
<comment type="disruption phenotype">
    <text evidence="3 5 6">Production of viable embryos and predominantly normal oocytes with a low percentage showing misorganization. Does not affect germline development in adult hermaphrodites. Impaired repression of glp-1 and fog-1. Simultaneous knockdown of puf-5, puf-6 and puf-7 results in abnormally small oocytes, disorganization of oocyte nuclei and cells, inefficient yolk uptake by oocytes, embryonic arrest with impaired eggshell formation and cytokinesis defects, impaired repression of glp-1 in late oogenesis, and mislocalization of rme-2 to the cytoplasm instead of the plasma membrane.</text>
</comment>
<reference evidence="8" key="1">
    <citation type="journal article" date="2007" name="Dev. Biol.">
        <title>The RNA-binding proteins PUF-5, PUF-6, and PUF-7 reveal multiple systems for maternal mRNA regulation during C. elegans oogenesis.</title>
        <authorList>
            <person name="Lublin A.L."/>
            <person name="Evans T.C."/>
        </authorList>
    </citation>
    <scope>NUCLEOTIDE SEQUENCE [MRNA]</scope>
    <scope>FUNCTION</scope>
    <scope>SUBCELLULAR LOCATION</scope>
    <scope>TISSUE SPECIFICITY</scope>
    <scope>DEVELOPMENTAL STAGE</scope>
    <scope>DISRUPTION PHENOTYPE</scope>
</reference>
<reference evidence="9" key="2">
    <citation type="journal article" date="1998" name="Science">
        <title>Genome sequence of the nematode C. elegans: a platform for investigating biology.</title>
        <authorList>
            <consortium name="The C. elegans sequencing consortium"/>
        </authorList>
    </citation>
    <scope>NUCLEOTIDE SEQUENCE [LARGE SCALE GENOMIC DNA]</scope>
    <source>
        <strain evidence="9">Bristol N2</strain>
    </source>
</reference>
<reference evidence="8" key="3">
    <citation type="journal article" date="2008" name="J. Cell Biol.">
        <title>Maternal mRNAs are regulated by diverse P body-related mRNP granules during early Caenorhabditis elegans development.</title>
        <authorList>
            <person name="Noble S.L."/>
            <person name="Allen B.L."/>
            <person name="Goh L.K."/>
            <person name="Nordick K."/>
            <person name="Evans T.C."/>
        </authorList>
    </citation>
    <scope>FUNCTION</scope>
    <scope>SUBCELLULAR LOCATION</scope>
    <scope>DISRUPTION PHENOTYPE</scope>
</reference>
<reference evidence="8" key="4">
    <citation type="journal article" date="2008" name="RNA">
        <title>A Caenorhabditis elegans PUF protein family with distinct RNA binding specificity.</title>
        <authorList>
            <person name="Stumpf C.R."/>
            <person name="Kimble J."/>
            <person name="Wickens M."/>
        </authorList>
    </citation>
    <scope>FUNCTION</scope>
</reference>
<reference evidence="8" key="5">
    <citation type="journal article" date="2012" name="Dev. Biol.">
        <title>A network of PUF proteins and Ras signaling promote mRNA repression and oogenesis in C. elegans.</title>
        <authorList>
            <person name="Hubstenberger A."/>
            <person name="Cameron C."/>
            <person name="Shtofman R."/>
            <person name="Gutman S."/>
            <person name="Evans T.C."/>
        </authorList>
    </citation>
    <scope>FUNCTION</scope>
    <scope>DISRUPTION PHENOTYPE</scope>
</reference>
<protein>
    <recommendedName>
        <fullName evidence="7">Pumilio domain-containing protein 5</fullName>
    </recommendedName>
</protein>
<feature type="chain" id="PRO_0000424283" description="Pumilio domain-containing protein 5">
    <location>
        <begin position="1"/>
        <end position="553"/>
    </location>
</feature>
<feature type="repeat" description="Pumilio 1" evidence="2">
    <location>
        <begin position="146"/>
        <end position="184"/>
    </location>
</feature>
<feature type="repeat" description="Pumilio 2" evidence="2">
    <location>
        <begin position="185"/>
        <end position="223"/>
    </location>
</feature>
<feature type="repeat" description="Pumilio 3" evidence="2">
    <location>
        <begin position="224"/>
        <end position="260"/>
    </location>
</feature>
<feature type="repeat" description="Pumilio 4" evidence="2">
    <location>
        <begin position="261"/>
        <end position="296"/>
    </location>
</feature>
<feature type="repeat" description="Pumilio 5" evidence="2">
    <location>
        <begin position="297"/>
        <end position="335"/>
    </location>
</feature>
<feature type="repeat" description="Pumilio 6" evidence="2">
    <location>
        <begin position="347"/>
        <end position="384"/>
    </location>
</feature>
<feature type="repeat" description="Pumilio 7" evidence="2">
    <location>
        <begin position="386"/>
        <end position="421"/>
    </location>
</feature>
<feature type="repeat" description="Pumilio 8" evidence="2">
    <location>
        <begin position="432"/>
        <end position="472"/>
    </location>
</feature>
<feature type="region of interest" description="RNA-binding" evidence="1">
    <location>
        <begin position="499"/>
        <end position="514"/>
    </location>
</feature>
<dbReference type="EMBL" id="Z49967">
    <property type="protein sequence ID" value="CAA90254.1"/>
    <property type="molecule type" value="Genomic_DNA"/>
</dbReference>
<dbReference type="PIR" id="T22634">
    <property type="entry name" value="T22634"/>
</dbReference>
<dbReference type="RefSeq" id="NP_495814.1">
    <property type="nucleotide sequence ID" value="NM_063413.5"/>
</dbReference>
<dbReference type="SMR" id="Q20757"/>
<dbReference type="BioGRID" id="39701">
    <property type="interactions" value="4"/>
</dbReference>
<dbReference type="FunCoup" id="Q20757">
    <property type="interactions" value="25"/>
</dbReference>
<dbReference type="STRING" id="6239.F54C9.8.1"/>
<dbReference type="PaxDb" id="6239-F54C9.8"/>
<dbReference type="PeptideAtlas" id="Q20757"/>
<dbReference type="EnsemblMetazoa" id="F54C9.8.1">
    <property type="protein sequence ID" value="F54C9.8.1"/>
    <property type="gene ID" value="WBGene00004241"/>
</dbReference>
<dbReference type="GeneID" id="174373"/>
<dbReference type="KEGG" id="cel:CELE_F54C9.8"/>
<dbReference type="UCSC" id="F54C9.8">
    <property type="organism name" value="c. elegans"/>
</dbReference>
<dbReference type="AGR" id="WB:WBGene00004241"/>
<dbReference type="CTD" id="174373"/>
<dbReference type="WormBase" id="F54C9.8">
    <property type="protein sequence ID" value="CE02258"/>
    <property type="gene ID" value="WBGene00004241"/>
    <property type="gene designation" value="puf-5"/>
</dbReference>
<dbReference type="eggNOG" id="KOG1488">
    <property type="taxonomic scope" value="Eukaryota"/>
</dbReference>
<dbReference type="GeneTree" id="ENSGT00970000196107"/>
<dbReference type="HOGENOM" id="CLU_028494_0_0_1"/>
<dbReference type="InParanoid" id="Q20757"/>
<dbReference type="OMA" id="MDISAHF"/>
<dbReference type="OrthoDB" id="668540at2759"/>
<dbReference type="PhylomeDB" id="Q20757"/>
<dbReference type="PRO" id="PR:Q20757"/>
<dbReference type="Proteomes" id="UP000001940">
    <property type="component" value="Chromosome II"/>
</dbReference>
<dbReference type="Bgee" id="WBGene00004241">
    <property type="expression patterns" value="Expressed in germ line (C elegans) and 4 other cell types or tissues"/>
</dbReference>
<dbReference type="GO" id="GO:0005737">
    <property type="term" value="C:cytoplasm"/>
    <property type="evidence" value="ECO:0000314"/>
    <property type="project" value="WormBase"/>
</dbReference>
<dbReference type="GO" id="GO:0005634">
    <property type="term" value="C:nucleus"/>
    <property type="evidence" value="ECO:0000318"/>
    <property type="project" value="GO_Central"/>
</dbReference>
<dbReference type="GO" id="GO:0043186">
    <property type="term" value="C:P granule"/>
    <property type="evidence" value="ECO:0000314"/>
    <property type="project" value="WormBase"/>
</dbReference>
<dbReference type="GO" id="GO:0000932">
    <property type="term" value="C:P-body"/>
    <property type="evidence" value="ECO:0007669"/>
    <property type="project" value="UniProtKB-SubCell"/>
</dbReference>
<dbReference type="GO" id="GO:0003730">
    <property type="term" value="F:mRNA 3'-UTR binding"/>
    <property type="evidence" value="ECO:0000314"/>
    <property type="project" value="WormBase"/>
</dbReference>
<dbReference type="GO" id="GO:0051301">
    <property type="term" value="P:cell division"/>
    <property type="evidence" value="ECO:0007669"/>
    <property type="project" value="UniProtKB-KW"/>
</dbReference>
<dbReference type="GO" id="GO:0048477">
    <property type="term" value="P:oogenesis"/>
    <property type="evidence" value="ECO:0007669"/>
    <property type="project" value="UniProtKB-KW"/>
</dbReference>
<dbReference type="GO" id="GO:0040019">
    <property type="term" value="P:positive regulation of embryonic development"/>
    <property type="evidence" value="ECO:0000316"/>
    <property type="project" value="UniProtKB"/>
</dbReference>
<dbReference type="GO" id="GO:0010608">
    <property type="term" value="P:post-transcriptional regulation of gene expression"/>
    <property type="evidence" value="ECO:0000318"/>
    <property type="project" value="GO_Central"/>
</dbReference>
<dbReference type="GO" id="GO:0006417">
    <property type="term" value="P:regulation of translation"/>
    <property type="evidence" value="ECO:0007669"/>
    <property type="project" value="UniProtKB-KW"/>
</dbReference>
<dbReference type="FunFam" id="1.25.10.10:FF:000558">
    <property type="entry name" value="Fem-3 mRNA-binding factor 2"/>
    <property type="match status" value="1"/>
</dbReference>
<dbReference type="Gene3D" id="1.25.10.10">
    <property type="entry name" value="Leucine-rich Repeat Variant"/>
    <property type="match status" value="1"/>
</dbReference>
<dbReference type="InterPro" id="IPR011989">
    <property type="entry name" value="ARM-like"/>
</dbReference>
<dbReference type="InterPro" id="IPR016024">
    <property type="entry name" value="ARM-type_fold"/>
</dbReference>
<dbReference type="InterPro" id="IPR033133">
    <property type="entry name" value="PUM-HD"/>
</dbReference>
<dbReference type="InterPro" id="IPR001313">
    <property type="entry name" value="Pumilio_RNA-bd_rpt"/>
</dbReference>
<dbReference type="PANTHER" id="PTHR12537:SF26">
    <property type="entry name" value="PUMILIO DOMAIN-CONTAINING PROTEIN 5-RELATED"/>
    <property type="match status" value="1"/>
</dbReference>
<dbReference type="PANTHER" id="PTHR12537">
    <property type="entry name" value="RNA BINDING PROTEIN PUMILIO-RELATED"/>
    <property type="match status" value="1"/>
</dbReference>
<dbReference type="Pfam" id="PF00806">
    <property type="entry name" value="PUF"/>
    <property type="match status" value="7"/>
</dbReference>
<dbReference type="SMART" id="SM00025">
    <property type="entry name" value="Pumilio"/>
    <property type="match status" value="7"/>
</dbReference>
<dbReference type="SUPFAM" id="SSF48371">
    <property type="entry name" value="ARM repeat"/>
    <property type="match status" value="1"/>
</dbReference>
<dbReference type="PROSITE" id="PS50302">
    <property type="entry name" value="PUM"/>
    <property type="match status" value="8"/>
</dbReference>
<dbReference type="PROSITE" id="PS50303">
    <property type="entry name" value="PUM_HD"/>
    <property type="match status" value="1"/>
</dbReference>
<keyword id="KW-0131">Cell cycle</keyword>
<keyword id="KW-0132">Cell division</keyword>
<keyword id="KW-0963">Cytoplasm</keyword>
<keyword id="KW-0217">Developmental protein</keyword>
<keyword id="KW-0221">Differentiation</keyword>
<keyword id="KW-0896">Oogenesis</keyword>
<keyword id="KW-1185">Reference proteome</keyword>
<keyword id="KW-0677">Repeat</keyword>
<keyword id="KW-0694">RNA-binding</keyword>
<keyword id="KW-0810">Translation regulation</keyword>
<accession>Q20757</accession>
<organism>
    <name type="scientific">Caenorhabditis elegans</name>
    <dbReference type="NCBI Taxonomy" id="6239"/>
    <lineage>
        <taxon>Eukaryota</taxon>
        <taxon>Metazoa</taxon>
        <taxon>Ecdysozoa</taxon>
        <taxon>Nematoda</taxon>
        <taxon>Chromadorea</taxon>
        <taxon>Rhabditida</taxon>
        <taxon>Rhabditina</taxon>
        <taxon>Rhabditomorpha</taxon>
        <taxon>Rhabditoidea</taxon>
        <taxon>Rhabditidae</taxon>
        <taxon>Peloderinae</taxon>
        <taxon>Caenorhabditis</taxon>
    </lineage>
</organism>